<gene>
    <name type="primary">IL1RN</name>
    <name type="synonym">IL1RA</name>
</gene>
<accession>P26890</accession>
<name>IL1RA_RABIT</name>
<sequence length="177" mass="20214">MRPSRSTRRHLISLLLFLFHSETACRPSGKRPCRMQAFRIWDVNQKTFYLRNNQLVAGYLQGPNAKLEERIDVVPLEPQLLFLGIQRGKLCLSCVKSGDKMKLHLEAVNITDLGKNKEQDKRFTFIRSNSGPTTTFESASCPGWFLCTALEADQPVSLTNTPDDSIVVTKFYFQEDQ</sequence>
<dbReference type="EMBL" id="S68977">
    <property type="protein sequence ID" value="AAB30093.1"/>
    <property type="molecule type" value="mRNA"/>
</dbReference>
<dbReference type="EMBL" id="M57526">
    <property type="protein sequence ID" value="AAA31374.1"/>
    <property type="molecule type" value="mRNA"/>
</dbReference>
<dbReference type="EMBL" id="D21832">
    <property type="protein sequence ID" value="BAA04860.1"/>
    <property type="molecule type" value="mRNA"/>
</dbReference>
<dbReference type="PIR" id="A54377">
    <property type="entry name" value="A54377"/>
</dbReference>
<dbReference type="RefSeq" id="NP_001076239.1">
    <property type="nucleotide sequence ID" value="NM_001082770.1"/>
</dbReference>
<dbReference type="SMR" id="P26890"/>
<dbReference type="FunCoup" id="P26890">
    <property type="interactions" value="15"/>
</dbReference>
<dbReference type="STRING" id="9986.ENSOCUP00000021003"/>
<dbReference type="GlyCosmos" id="P26890">
    <property type="glycosylation" value="1 site, No reported glycans"/>
</dbReference>
<dbReference type="PaxDb" id="9986-ENSOCUP00000021003"/>
<dbReference type="GeneID" id="100009558"/>
<dbReference type="KEGG" id="ocu:100009558"/>
<dbReference type="CTD" id="3557"/>
<dbReference type="eggNOG" id="ENOG502S5F0">
    <property type="taxonomic scope" value="Eukaryota"/>
</dbReference>
<dbReference type="InParanoid" id="P26890"/>
<dbReference type="OrthoDB" id="9274793at2759"/>
<dbReference type="TreeFam" id="TF300203"/>
<dbReference type="Proteomes" id="UP000001811">
    <property type="component" value="Unplaced"/>
</dbReference>
<dbReference type="GO" id="GO:0005615">
    <property type="term" value="C:extracellular space"/>
    <property type="evidence" value="ECO:0007669"/>
    <property type="project" value="InterPro"/>
</dbReference>
<dbReference type="GO" id="GO:0005125">
    <property type="term" value="F:cytokine activity"/>
    <property type="evidence" value="ECO:0007669"/>
    <property type="project" value="InterPro"/>
</dbReference>
<dbReference type="GO" id="GO:0005152">
    <property type="term" value="F:interleukin-1 receptor antagonist activity"/>
    <property type="evidence" value="ECO:0007669"/>
    <property type="project" value="TreeGrafter"/>
</dbReference>
<dbReference type="GO" id="GO:0005149">
    <property type="term" value="F:interleukin-1 receptor binding"/>
    <property type="evidence" value="ECO:0007669"/>
    <property type="project" value="InterPro"/>
</dbReference>
<dbReference type="GO" id="GO:0002437">
    <property type="term" value="P:inflammatory response to antigenic stimulus"/>
    <property type="evidence" value="ECO:0007669"/>
    <property type="project" value="TreeGrafter"/>
</dbReference>
<dbReference type="GO" id="GO:2000660">
    <property type="term" value="P:negative regulation of interleukin-1-mediated signaling pathway"/>
    <property type="evidence" value="ECO:0007669"/>
    <property type="project" value="TreeGrafter"/>
</dbReference>
<dbReference type="FunFam" id="2.80.10.50:FF:000013">
    <property type="entry name" value="Interleukin-1"/>
    <property type="match status" value="1"/>
</dbReference>
<dbReference type="Gene3D" id="2.80.10.50">
    <property type="match status" value="1"/>
</dbReference>
<dbReference type="InterPro" id="IPR020877">
    <property type="entry name" value="IL-1_CS"/>
</dbReference>
<dbReference type="InterPro" id="IPR000975">
    <property type="entry name" value="IL-1_fam"/>
</dbReference>
<dbReference type="InterPro" id="IPR003297">
    <property type="entry name" value="IL-1RA/IL-36"/>
</dbReference>
<dbReference type="InterPro" id="IPR008996">
    <property type="entry name" value="IL1/FGF"/>
</dbReference>
<dbReference type="PANTHER" id="PTHR10078">
    <property type="entry name" value="INTERLEUKIN-1 FAMILY MEMBER"/>
    <property type="match status" value="1"/>
</dbReference>
<dbReference type="PANTHER" id="PTHR10078:SF28">
    <property type="entry name" value="INTERLEUKIN-1 RECEPTOR ANTAGONIST PROTEIN"/>
    <property type="match status" value="1"/>
</dbReference>
<dbReference type="Pfam" id="PF00340">
    <property type="entry name" value="IL1"/>
    <property type="match status" value="1"/>
</dbReference>
<dbReference type="PRINTS" id="PR00264">
    <property type="entry name" value="INTERLEUKIN1"/>
</dbReference>
<dbReference type="PRINTS" id="PR01360">
    <property type="entry name" value="INTRLEUKIN1X"/>
</dbReference>
<dbReference type="SMART" id="SM00125">
    <property type="entry name" value="IL1"/>
    <property type="match status" value="1"/>
</dbReference>
<dbReference type="SUPFAM" id="SSF50353">
    <property type="entry name" value="Cytokine"/>
    <property type="match status" value="1"/>
</dbReference>
<dbReference type="PROSITE" id="PS00253">
    <property type="entry name" value="INTERLEUKIN_1"/>
    <property type="match status" value="1"/>
</dbReference>
<feature type="signal peptide" evidence="1">
    <location>
        <begin position="1"/>
        <end position="25"/>
    </location>
</feature>
<feature type="chain" id="PRO_0000015332" description="Interleukin-1 receptor antagonist protein">
    <location>
        <begin position="26"/>
        <end position="177"/>
    </location>
</feature>
<feature type="glycosylation site" description="N-linked (GlcNAc...) asparagine" evidence="4">
    <location>
        <position position="109"/>
    </location>
</feature>
<feature type="disulfide bond" evidence="1">
    <location>
        <begin position="91"/>
        <end position="141"/>
    </location>
</feature>
<keyword id="KW-1015">Disulfide bond</keyword>
<keyword id="KW-0325">Glycoprotein</keyword>
<keyword id="KW-1185">Reference proteome</keyword>
<keyword id="KW-0964">Secreted</keyword>
<keyword id="KW-0732">Signal</keyword>
<reference key="1">
    <citation type="journal article" date="1994" name="J. Biol. Chem.">
        <title>Rabbit interleukin-1 receptor antagonist. Cloning, expression, functional characterization, and regulation during intestinal inflammation.</title>
        <authorList>
            <person name="Cominelli F."/>
            <person name="Bortolami M."/>
            <person name="Pizarro T.T."/>
            <person name="Monsacchi L."/>
            <person name="Ferretti M."/>
            <person name="Brewer M.T."/>
            <person name="Eisenberg S.P."/>
            <person name="Ng R.K."/>
        </authorList>
    </citation>
    <scope>NUCLEOTIDE SEQUENCE [MRNA]</scope>
</reference>
<reference key="2">
    <citation type="submission" date="1992-04" db="EMBL/GenBank/DDBJ databases">
        <authorList>
            <person name="Hamada H."/>
            <person name="Mulligan R.C."/>
        </authorList>
    </citation>
    <scope>NUCLEOTIDE SEQUENCE [MRNA]</scope>
</reference>
<reference key="3">
    <citation type="journal article" date="1992" name="Immunology">
        <title>Interleukin-1 receptor antagonist in inflammatory exudate cells of rabbits. Production, purification and determination of primary structure.</title>
        <authorList>
            <person name="Goto F."/>
            <person name="Goto K."/>
            <person name="Miyata T."/>
            <person name="Ohkawara S."/>
            <person name="Takao T."/>
            <person name="Mori S."/>
            <person name="Furukawa S."/>
            <person name="Maeda T."/>
            <person name="Iwanaga S."/>
            <person name="Shimonishi Y."/>
            <person name="Yoshinaga M."/>
        </authorList>
    </citation>
    <scope>NUCLEOTIDE SEQUENCE [MRNA]</scope>
</reference>
<organism>
    <name type="scientific">Oryctolagus cuniculus</name>
    <name type="common">Rabbit</name>
    <dbReference type="NCBI Taxonomy" id="9986"/>
    <lineage>
        <taxon>Eukaryota</taxon>
        <taxon>Metazoa</taxon>
        <taxon>Chordata</taxon>
        <taxon>Craniata</taxon>
        <taxon>Vertebrata</taxon>
        <taxon>Euteleostomi</taxon>
        <taxon>Mammalia</taxon>
        <taxon>Eutheria</taxon>
        <taxon>Euarchontoglires</taxon>
        <taxon>Glires</taxon>
        <taxon>Lagomorpha</taxon>
        <taxon>Leporidae</taxon>
        <taxon>Oryctolagus</taxon>
    </lineage>
</organism>
<proteinExistence type="evidence at transcript level"/>
<evidence type="ECO:0000250" key="1"/>
<evidence type="ECO:0000250" key="2">
    <source>
        <dbReference type="UniProtKB" id="P18510"/>
    </source>
</evidence>
<evidence type="ECO:0000250" key="3">
    <source>
        <dbReference type="UniProtKB" id="P25085"/>
    </source>
</evidence>
<evidence type="ECO:0000255" key="4"/>
<evidence type="ECO:0000305" key="5"/>
<comment type="function">
    <text evidence="3">Anti-inflammatory antagonist of interleukin-1 family of proinflammatory cytokines such as interleukin-1beta/IL1B and interleukin-1alpha/IL1A. Protects from immune dysregulation and uncontrolled systemic inflammation triggered by IL1 for a range of innate stimulatory agents such as pathogens.</text>
</comment>
<comment type="subcellular location">
    <subcellularLocation>
        <location evidence="2">Secreted</location>
    </subcellularLocation>
</comment>
<comment type="similarity">
    <text evidence="5">Belongs to the IL-1 family.</text>
</comment>
<protein>
    <recommendedName>
        <fullName>Interleukin-1 receptor antagonist protein</fullName>
        <shortName>IL-1RN</shortName>
        <shortName>IL-1ra</shortName>
        <shortName>IRAP</shortName>
    </recommendedName>
    <alternativeName>
        <fullName>IL1 inhibitor</fullName>
    </alternativeName>
</protein>